<feature type="chain" id="PRO_0000349452" description="Actin cytoskeleton-regulatory complex protein end3">
    <location>
        <begin position="1"/>
        <end position="404"/>
    </location>
</feature>
<feature type="domain" description="EH 1" evidence="3">
    <location>
        <begin position="10"/>
        <end position="100"/>
    </location>
</feature>
<feature type="domain" description="EF-hand" evidence="4">
    <location>
        <begin position="42"/>
        <end position="77"/>
    </location>
</feature>
<feature type="domain" description="EH 2" evidence="3">
    <location>
        <begin position="139"/>
        <end position="227"/>
    </location>
</feature>
<feature type="region of interest" description="Disordered" evidence="5">
    <location>
        <begin position="306"/>
        <end position="327"/>
    </location>
</feature>
<feature type="coiled-coil region" evidence="2">
    <location>
        <begin position="281"/>
        <end position="404"/>
    </location>
</feature>
<feature type="compositionally biased region" description="Basic and acidic residues" evidence="5">
    <location>
        <begin position="313"/>
        <end position="324"/>
    </location>
</feature>
<feature type="binding site" evidence="4">
    <location>
        <position position="55"/>
    </location>
    <ligand>
        <name>Ca(2+)</name>
        <dbReference type="ChEBI" id="CHEBI:29108"/>
    </ligand>
</feature>
<feature type="binding site" evidence="4">
    <location>
        <position position="57"/>
    </location>
    <ligand>
        <name>Ca(2+)</name>
        <dbReference type="ChEBI" id="CHEBI:29108"/>
    </ligand>
</feature>
<feature type="binding site" evidence="4">
    <location>
        <position position="59"/>
    </location>
    <ligand>
        <name>Ca(2+)</name>
        <dbReference type="ChEBI" id="CHEBI:29108"/>
    </ligand>
</feature>
<feature type="binding site" evidence="4">
    <location>
        <position position="61"/>
    </location>
    <ligand>
        <name>Ca(2+)</name>
        <dbReference type="ChEBI" id="CHEBI:29108"/>
    </ligand>
</feature>
<feature type="binding site" evidence="4">
    <location>
        <position position="66"/>
    </location>
    <ligand>
        <name>Ca(2+)</name>
        <dbReference type="ChEBI" id="CHEBI:29108"/>
    </ligand>
</feature>
<proteinExistence type="inferred from homology"/>
<organism>
    <name type="scientific">Neosartorya fischeri (strain ATCC 1020 / DSM 3700 / CBS 544.65 / FGSC A1164 / JCM 1740 / NRRL 181 / WB 181)</name>
    <name type="common">Aspergillus fischerianus</name>
    <dbReference type="NCBI Taxonomy" id="331117"/>
    <lineage>
        <taxon>Eukaryota</taxon>
        <taxon>Fungi</taxon>
        <taxon>Dikarya</taxon>
        <taxon>Ascomycota</taxon>
        <taxon>Pezizomycotina</taxon>
        <taxon>Eurotiomycetes</taxon>
        <taxon>Eurotiomycetidae</taxon>
        <taxon>Eurotiales</taxon>
        <taxon>Aspergillaceae</taxon>
        <taxon>Aspergillus</taxon>
        <taxon>Aspergillus subgen. Fumigati</taxon>
    </lineage>
</organism>
<accession>A1D2B8</accession>
<sequence>MSNKKIEQWEIERYWEIFSSLANGHPRLNSSQAASVLRNSRLSDDQLEKVWDLADVDGDGELDFEEFCVAMRLVFDLVNGELQAVPRVLPDWLVPETKAHLVQAGRALSDRPEQFERIEDEDDTPGLKDGFDWYMKPSDKSKYEEIYSANRNHRGEITFESLQGLYDSLDVPDTDIRSAWNLVNPSASLAINKDATLAFLHILNYRHEGFRIPRTIPASLRASFENNKIDYQIDNARPAQRWGADGDRETPTGRKAKFGDTYLSRLGVGGKGSYTPKGTDFSDTIQDEEWEKVRLRRELSELQAKLDAANKASEGRRDRPRNDGRPNWTLIKKEALQLLEYKERELRELREGTGRAKAGQDLERLREDIRTVGEQVEGLKSHLAQRKEVLADLRSQIEEERARR</sequence>
<gene>
    <name type="primary">end3</name>
    <name type="synonym">sagA</name>
    <name type="ORF">NFIA_012500</name>
</gene>
<protein>
    <recommendedName>
        <fullName>Actin cytoskeleton-regulatory complex protein end3</fullName>
    </recommendedName>
    <alternativeName>
        <fullName>Cytoskeletal adapter protein sagA</fullName>
    </alternativeName>
    <alternativeName>
        <fullName>Endocytosis protein 3</fullName>
    </alternativeName>
</protein>
<keyword id="KW-0009">Actin-binding</keyword>
<keyword id="KW-0106">Calcium</keyword>
<keyword id="KW-1003">Cell membrane</keyword>
<keyword id="KW-0175">Coiled coil</keyword>
<keyword id="KW-0963">Cytoplasm</keyword>
<keyword id="KW-0206">Cytoskeleton</keyword>
<keyword id="KW-0254">Endocytosis</keyword>
<keyword id="KW-0967">Endosome</keyword>
<keyword id="KW-0472">Membrane</keyword>
<keyword id="KW-0479">Metal-binding</keyword>
<keyword id="KW-1185">Reference proteome</keyword>
<keyword id="KW-0677">Repeat</keyword>
<dbReference type="EMBL" id="DS027688">
    <property type="protein sequence ID" value="EAW22561.1"/>
    <property type="molecule type" value="Genomic_DNA"/>
</dbReference>
<dbReference type="RefSeq" id="XP_001264458.1">
    <property type="nucleotide sequence ID" value="XM_001264457.1"/>
</dbReference>
<dbReference type="STRING" id="331117.A1D2B8"/>
<dbReference type="EnsemblFungi" id="EAW22561">
    <property type="protein sequence ID" value="EAW22561"/>
    <property type="gene ID" value="NFIA_012500"/>
</dbReference>
<dbReference type="GeneID" id="4591263"/>
<dbReference type="KEGG" id="nfi:NFIA_012500"/>
<dbReference type="VEuPathDB" id="FungiDB:NFIA_012500"/>
<dbReference type="eggNOG" id="KOG0998">
    <property type="taxonomic scope" value="Eukaryota"/>
</dbReference>
<dbReference type="HOGENOM" id="CLU_040829_0_0_1"/>
<dbReference type="OMA" id="DWLIPES"/>
<dbReference type="OrthoDB" id="1716625at2759"/>
<dbReference type="Proteomes" id="UP000006702">
    <property type="component" value="Unassembled WGS sequence"/>
</dbReference>
<dbReference type="GO" id="GO:0030479">
    <property type="term" value="C:actin cortical patch"/>
    <property type="evidence" value="ECO:0007669"/>
    <property type="project" value="UniProtKB-SubCell"/>
</dbReference>
<dbReference type="GO" id="GO:0010008">
    <property type="term" value="C:endosome membrane"/>
    <property type="evidence" value="ECO:0007669"/>
    <property type="project" value="UniProtKB-SubCell"/>
</dbReference>
<dbReference type="GO" id="GO:0005886">
    <property type="term" value="C:plasma membrane"/>
    <property type="evidence" value="ECO:0007669"/>
    <property type="project" value="UniProtKB-SubCell"/>
</dbReference>
<dbReference type="GO" id="GO:0003779">
    <property type="term" value="F:actin binding"/>
    <property type="evidence" value="ECO:0007669"/>
    <property type="project" value="UniProtKB-KW"/>
</dbReference>
<dbReference type="GO" id="GO:0005509">
    <property type="term" value="F:calcium ion binding"/>
    <property type="evidence" value="ECO:0007669"/>
    <property type="project" value="InterPro"/>
</dbReference>
<dbReference type="GO" id="GO:0007015">
    <property type="term" value="P:actin filament organization"/>
    <property type="evidence" value="ECO:0007669"/>
    <property type="project" value="InterPro"/>
</dbReference>
<dbReference type="GO" id="GO:0006897">
    <property type="term" value="P:endocytosis"/>
    <property type="evidence" value="ECO:0007669"/>
    <property type="project" value="UniProtKB-KW"/>
</dbReference>
<dbReference type="GO" id="GO:0016197">
    <property type="term" value="P:endosomal transport"/>
    <property type="evidence" value="ECO:0007669"/>
    <property type="project" value="TreeGrafter"/>
</dbReference>
<dbReference type="CDD" id="cd00052">
    <property type="entry name" value="EH"/>
    <property type="match status" value="1"/>
</dbReference>
<dbReference type="FunFam" id="1.10.238.10:FF:000339">
    <property type="entry name" value="Actin cytoskeleton-regulatory complex protein END3"/>
    <property type="match status" value="1"/>
</dbReference>
<dbReference type="FunFam" id="1.10.238.10:FF:000323">
    <property type="entry name" value="Actin cytoskeleton-regulatory complex protein end3"/>
    <property type="match status" value="1"/>
</dbReference>
<dbReference type="Gene3D" id="1.10.238.10">
    <property type="entry name" value="EF-hand"/>
    <property type="match status" value="2"/>
</dbReference>
<dbReference type="InterPro" id="IPR011992">
    <property type="entry name" value="EF-hand-dom_pair"/>
</dbReference>
<dbReference type="InterPro" id="IPR018247">
    <property type="entry name" value="EF_Hand_1_Ca_BS"/>
</dbReference>
<dbReference type="InterPro" id="IPR002048">
    <property type="entry name" value="EF_hand_dom"/>
</dbReference>
<dbReference type="InterPro" id="IPR000261">
    <property type="entry name" value="EH_dom"/>
</dbReference>
<dbReference type="InterPro" id="IPR025604">
    <property type="entry name" value="End3"/>
</dbReference>
<dbReference type="PANTHER" id="PTHR11216">
    <property type="entry name" value="EH DOMAIN"/>
    <property type="match status" value="1"/>
</dbReference>
<dbReference type="Pfam" id="PF12763">
    <property type="entry name" value="EH"/>
    <property type="match status" value="1"/>
</dbReference>
<dbReference type="Pfam" id="PF12761">
    <property type="entry name" value="End3"/>
    <property type="match status" value="1"/>
</dbReference>
<dbReference type="SMART" id="SM00054">
    <property type="entry name" value="EFh"/>
    <property type="match status" value="1"/>
</dbReference>
<dbReference type="SMART" id="SM00027">
    <property type="entry name" value="EH"/>
    <property type="match status" value="2"/>
</dbReference>
<dbReference type="SUPFAM" id="SSF47473">
    <property type="entry name" value="EF-hand"/>
    <property type="match status" value="2"/>
</dbReference>
<dbReference type="PROSITE" id="PS00018">
    <property type="entry name" value="EF_HAND_1"/>
    <property type="match status" value="1"/>
</dbReference>
<dbReference type="PROSITE" id="PS50222">
    <property type="entry name" value="EF_HAND_2"/>
    <property type="match status" value="1"/>
</dbReference>
<dbReference type="PROSITE" id="PS50031">
    <property type="entry name" value="EH"/>
    <property type="match status" value="2"/>
</dbReference>
<evidence type="ECO:0000250" key="1"/>
<evidence type="ECO:0000255" key="2"/>
<evidence type="ECO:0000255" key="3">
    <source>
        <dbReference type="PROSITE-ProRule" id="PRU00077"/>
    </source>
</evidence>
<evidence type="ECO:0000255" key="4">
    <source>
        <dbReference type="PROSITE-ProRule" id="PRU00448"/>
    </source>
</evidence>
<evidence type="ECO:0000256" key="5">
    <source>
        <dbReference type="SAM" id="MobiDB-lite"/>
    </source>
</evidence>
<evidence type="ECO:0000305" key="6"/>
<name>END3_NEOFI</name>
<comment type="function">
    <text evidence="1">Component of the PAN1 actin cytoskeleton-regulatory complex required for the internalization of endosomes during actin-coupled endocytosis. The complex links the site of endocytosis to the cell membrane-associated actin cytoskeleton. Mediates uptake of external molecules and vacuolar degradation of plasma membrane proteins. Plays a role in the proper organization of the cell membrane-associated actin cytoskeleton and promotes its destabilization (By similarity).</text>
</comment>
<comment type="subunit">
    <text evidence="1">Component of the PAN1 actin cytoskeleton-regulatory complex.</text>
</comment>
<comment type="subcellular location">
    <subcellularLocation>
        <location evidence="1">Cell membrane</location>
        <topology evidence="1">Peripheral membrane protein</topology>
        <orientation evidence="1">Cytoplasmic side</orientation>
    </subcellularLocation>
    <subcellularLocation>
        <location evidence="1">Endosome membrane</location>
        <topology evidence="1">Peripheral membrane protein</topology>
        <orientation evidence="1">Cytoplasmic side</orientation>
    </subcellularLocation>
    <subcellularLocation>
        <location evidence="1">Cytoplasm</location>
        <location evidence="1">Cytoskeleton</location>
        <location evidence="1">Actin patch</location>
    </subcellularLocation>
    <text evidence="1">Cytoplasmic and cortical actin patches.</text>
</comment>
<comment type="similarity">
    <text evidence="6">Belongs to the END3 family.</text>
</comment>
<reference key="1">
    <citation type="journal article" date="2008" name="PLoS Genet.">
        <title>Genomic islands in the pathogenic filamentous fungus Aspergillus fumigatus.</title>
        <authorList>
            <person name="Fedorova N.D."/>
            <person name="Khaldi N."/>
            <person name="Joardar V.S."/>
            <person name="Maiti R."/>
            <person name="Amedeo P."/>
            <person name="Anderson M.J."/>
            <person name="Crabtree J."/>
            <person name="Silva J.C."/>
            <person name="Badger J.H."/>
            <person name="Albarraq A."/>
            <person name="Angiuoli S."/>
            <person name="Bussey H."/>
            <person name="Bowyer P."/>
            <person name="Cotty P.J."/>
            <person name="Dyer P.S."/>
            <person name="Egan A."/>
            <person name="Galens K."/>
            <person name="Fraser-Liggett C.M."/>
            <person name="Haas B.J."/>
            <person name="Inman J.M."/>
            <person name="Kent R."/>
            <person name="Lemieux S."/>
            <person name="Malavazi I."/>
            <person name="Orvis J."/>
            <person name="Roemer T."/>
            <person name="Ronning C.M."/>
            <person name="Sundaram J.P."/>
            <person name="Sutton G."/>
            <person name="Turner G."/>
            <person name="Venter J.C."/>
            <person name="White O.R."/>
            <person name="Whitty B.R."/>
            <person name="Youngman P."/>
            <person name="Wolfe K.H."/>
            <person name="Goldman G.H."/>
            <person name="Wortman J.R."/>
            <person name="Jiang B."/>
            <person name="Denning D.W."/>
            <person name="Nierman W.C."/>
        </authorList>
    </citation>
    <scope>NUCLEOTIDE SEQUENCE [LARGE SCALE GENOMIC DNA]</scope>
    <source>
        <strain>ATCC 1020 / DSM 3700 / CBS 544.65 / FGSC A1164 / JCM 1740 / NRRL 181 / WB 181</strain>
    </source>
</reference>